<reference key="1">
    <citation type="journal article" date="2000" name="Nature">
        <title>Sequence and analysis of chromosome 1 of the plant Arabidopsis thaliana.</title>
        <authorList>
            <person name="Theologis A."/>
            <person name="Ecker J.R."/>
            <person name="Palm C.J."/>
            <person name="Federspiel N.A."/>
            <person name="Kaul S."/>
            <person name="White O."/>
            <person name="Alonso J."/>
            <person name="Altafi H."/>
            <person name="Araujo R."/>
            <person name="Bowman C.L."/>
            <person name="Brooks S.Y."/>
            <person name="Buehler E."/>
            <person name="Chan A."/>
            <person name="Chao Q."/>
            <person name="Chen H."/>
            <person name="Cheuk R.F."/>
            <person name="Chin C.W."/>
            <person name="Chung M.K."/>
            <person name="Conn L."/>
            <person name="Conway A.B."/>
            <person name="Conway A.R."/>
            <person name="Creasy T.H."/>
            <person name="Dewar K."/>
            <person name="Dunn P."/>
            <person name="Etgu P."/>
            <person name="Feldblyum T.V."/>
            <person name="Feng J.-D."/>
            <person name="Fong B."/>
            <person name="Fujii C.Y."/>
            <person name="Gill J.E."/>
            <person name="Goldsmith A.D."/>
            <person name="Haas B."/>
            <person name="Hansen N.F."/>
            <person name="Hughes B."/>
            <person name="Huizar L."/>
            <person name="Hunter J.L."/>
            <person name="Jenkins J."/>
            <person name="Johnson-Hopson C."/>
            <person name="Khan S."/>
            <person name="Khaykin E."/>
            <person name="Kim C.J."/>
            <person name="Koo H.L."/>
            <person name="Kremenetskaia I."/>
            <person name="Kurtz D.B."/>
            <person name="Kwan A."/>
            <person name="Lam B."/>
            <person name="Langin-Hooper S."/>
            <person name="Lee A."/>
            <person name="Lee J.M."/>
            <person name="Lenz C.A."/>
            <person name="Li J.H."/>
            <person name="Li Y.-P."/>
            <person name="Lin X."/>
            <person name="Liu S.X."/>
            <person name="Liu Z.A."/>
            <person name="Luros J.S."/>
            <person name="Maiti R."/>
            <person name="Marziali A."/>
            <person name="Militscher J."/>
            <person name="Miranda M."/>
            <person name="Nguyen M."/>
            <person name="Nierman W.C."/>
            <person name="Osborne B.I."/>
            <person name="Pai G."/>
            <person name="Peterson J."/>
            <person name="Pham P.K."/>
            <person name="Rizzo M."/>
            <person name="Rooney T."/>
            <person name="Rowley D."/>
            <person name="Sakano H."/>
            <person name="Salzberg S.L."/>
            <person name="Schwartz J.R."/>
            <person name="Shinn P."/>
            <person name="Southwick A.M."/>
            <person name="Sun H."/>
            <person name="Tallon L.J."/>
            <person name="Tambunga G."/>
            <person name="Toriumi M.J."/>
            <person name="Town C.D."/>
            <person name="Utterback T."/>
            <person name="Van Aken S."/>
            <person name="Vaysberg M."/>
            <person name="Vysotskaia V.S."/>
            <person name="Walker M."/>
            <person name="Wu D."/>
            <person name="Yu G."/>
            <person name="Fraser C.M."/>
            <person name="Venter J.C."/>
            <person name="Davis R.W."/>
        </authorList>
    </citation>
    <scope>NUCLEOTIDE SEQUENCE [LARGE SCALE GENOMIC DNA]</scope>
    <source>
        <strain>cv. Columbia</strain>
    </source>
</reference>
<reference key="2">
    <citation type="journal article" date="2017" name="Plant J.">
        <title>Araport11: a complete reannotation of the Arabidopsis thaliana reference genome.</title>
        <authorList>
            <person name="Cheng C.Y."/>
            <person name="Krishnakumar V."/>
            <person name="Chan A.P."/>
            <person name="Thibaud-Nissen F."/>
            <person name="Schobel S."/>
            <person name="Town C.D."/>
        </authorList>
    </citation>
    <scope>GENOME REANNOTATION</scope>
    <source>
        <strain>cv. Columbia</strain>
    </source>
</reference>
<reference key="3">
    <citation type="submission" date="2006-07" db="EMBL/GenBank/DDBJ databases">
        <title>Large-scale analysis of RIKEN Arabidopsis full-length (RAFL) cDNAs.</title>
        <authorList>
            <person name="Totoki Y."/>
            <person name="Seki M."/>
            <person name="Ishida J."/>
            <person name="Nakajima M."/>
            <person name="Enju A."/>
            <person name="Kamiya A."/>
            <person name="Narusaka M."/>
            <person name="Shin-i T."/>
            <person name="Nakagawa M."/>
            <person name="Sakamoto N."/>
            <person name="Oishi K."/>
            <person name="Kohara Y."/>
            <person name="Kobayashi M."/>
            <person name="Toyoda A."/>
            <person name="Sakaki Y."/>
            <person name="Sakurai T."/>
            <person name="Iida K."/>
            <person name="Akiyama K."/>
            <person name="Satou M."/>
            <person name="Toyoda T."/>
            <person name="Konagaya A."/>
            <person name="Carninci P."/>
            <person name="Kawai J."/>
            <person name="Hayashizaki Y."/>
            <person name="Shinozaki K."/>
        </authorList>
    </citation>
    <scope>NUCLEOTIDE SEQUENCE [LARGE SCALE MRNA]</scope>
    <source>
        <strain>cv. Columbia</strain>
    </source>
</reference>
<comment type="function">
    <text evidence="4">Cleaves peptide substrates on the N-terminus of arginine residues in dibasic pairs.</text>
</comment>
<comment type="catalytic activity">
    <reaction evidence="4">
        <text>Hydrolysis of polypeptides, preferably at -Xaa-|-Arg-Lys-, and less commonly at -Arg-|-Arg-Xaa-, in which Xaa is not Arg or Lys.</text>
        <dbReference type="EC" id="3.4.24.61"/>
    </reaction>
</comment>
<comment type="cofactor">
    <cofactor evidence="1">
        <name>Zn(2+)</name>
        <dbReference type="ChEBI" id="CHEBI:29105"/>
    </cofactor>
    <text evidence="1">Binds 1 zinc ion per subunit.</text>
</comment>
<comment type="similarity">
    <text evidence="4">Belongs to the peptidase M16 family.</text>
</comment>
<comment type="sequence caution" evidence="4">
    <conflict type="erroneous gene model prediction">
        <sequence resource="EMBL-CDS" id="AAF63132"/>
    </conflict>
</comment>
<comment type="sequence caution" evidence="4">
    <conflict type="erroneous initiation">
        <sequence resource="EMBL-CDS" id="BAF01167"/>
    </conflict>
    <text>Extended N-terminus.</text>
</comment>
<organism>
    <name type="scientific">Arabidopsis thaliana</name>
    <name type="common">Mouse-ear cress</name>
    <dbReference type="NCBI Taxonomy" id="3702"/>
    <lineage>
        <taxon>Eukaryota</taxon>
        <taxon>Viridiplantae</taxon>
        <taxon>Streptophyta</taxon>
        <taxon>Embryophyta</taxon>
        <taxon>Tracheophyta</taxon>
        <taxon>Spermatophyta</taxon>
        <taxon>Magnoliopsida</taxon>
        <taxon>eudicotyledons</taxon>
        <taxon>Gunneridae</taxon>
        <taxon>Pentapetalae</taxon>
        <taxon>rosids</taxon>
        <taxon>malvids</taxon>
        <taxon>Brassicales</taxon>
        <taxon>Brassicaceae</taxon>
        <taxon>Camelineae</taxon>
        <taxon>Arabidopsis</taxon>
    </lineage>
</organism>
<accession>F4HNU6</accession>
<accession>Q0WNY2</accession>
<accession>Q9M9Z4</accession>
<name>NRDC_ARATH</name>
<proteinExistence type="evidence at transcript level"/>
<keyword id="KW-0378">Hydrolase</keyword>
<keyword id="KW-0479">Metal-binding</keyword>
<keyword id="KW-0482">Metalloprotease</keyword>
<keyword id="KW-0645">Protease</keyword>
<keyword id="KW-1185">Reference proteome</keyword>
<keyword id="KW-0862">Zinc</keyword>
<gene>
    <name evidence="5" type="ordered locus">At1g06900</name>
    <name evidence="6" type="ORF">F4H5.4</name>
</gene>
<protein>
    <recommendedName>
        <fullName evidence="4">Nardilysin-like</fullName>
        <ecNumber evidence="4">3.4.24.61</ecNumber>
    </recommendedName>
    <alternativeName>
        <fullName evidence="4">N-arginine dibasic convertase-like</fullName>
        <shortName evidence="4">NRD convertase-like</shortName>
        <shortName evidence="4">NRD-C</shortName>
    </alternativeName>
</protein>
<sequence>MSSMKSVSALDNVVVKSPNDRRLYRVIELENGLCALLIHDPDIYPEGSVPDQIDEDDEDGEEEDSDGSSEDDDDDEDDEEDGEGDEEDEDEDEDEVKGKGDHQTKKAAAAMCVSMGSFLDPPEAQGLAHFLEHMLFMGSTEFPDENEYDSYLSKHGGSSNAYTEMEHTCYHFEVKREFLQGALKRFSQFFVAPLMKTEAMEREVLAVDSEFNQALQNDACRLQQLQCYTSAKGHPFNRFAWGNKKSLSGAMENGVDLRECIVKLYKEYYHGGLMKLVVIGGESLDMLESWVVELFGDVKNGSKIRPTLEAEGPIWKGGKLYRLEAVKDVHILDLTWTLPPLRSAYVKKPEDYLAHLLGHEGRGSLHSFLKAKGWATSLSAGVGDDGINRSSLAYVFGMSIHLTDSGLEKIYDIIGYIYQYLKLLRDVSPQEWIFKELQDIGNMDFRFAEEQPADDYAAELSENMLAYPVEHVIYGDYVYQTWDPKLIEDLMGFFTPQNMRIDVVSKSIKSEEFQQEPWFGSSYIEEDVPLSLMESWSNPSEVDNSLHLPSKNQFIPCDFSIRAINSDVDPKSQSPPRCIIDEPFMKFWYKLDETFKVPRANTYFRINLKGAYASVKNCLLTELYINLLKDELNEIIYQASIAKLETSLSMYGDKLELKVYGFNEKIPALLSKILAIAKSFMPNLERFKVIKENMERGFRNTNMKPLNHSTYLRLQLLCKRIYDSDEKLSVLNDLSLDDLNSFIPELRSQIFIEALCHGNLSEDEAVNISNIFKDSLTVEPLPSKCRHGEQITCFPMGAKLVRDVNVKNKSETNSVVELYYQIEPEEAQSTRTKAVLDLFHEIIEEPLFNQLRTKEQLGYVVECGPRLTYRVHGFCFCVQSSKYGPVHLLGRVDNFIKDIEGLLEQLDDESYEDYRSGMIARLLEKDPSLLSETNDLWSQIVDKRYMFDFSHKEAEELRSIQKKDVISWYKTYFRESSPKCRRLAVRVWGCDTNMKETQTDQKAVQVIADAVAFKSTSKFYPSLC</sequence>
<evidence type="ECO:0000250" key="1"/>
<evidence type="ECO:0000255" key="2">
    <source>
        <dbReference type="PROSITE-ProRule" id="PRU10096"/>
    </source>
</evidence>
<evidence type="ECO:0000256" key="3">
    <source>
        <dbReference type="SAM" id="MobiDB-lite"/>
    </source>
</evidence>
<evidence type="ECO:0000305" key="4"/>
<evidence type="ECO:0000312" key="5">
    <source>
        <dbReference type="Araport" id="AT1G06900"/>
    </source>
</evidence>
<evidence type="ECO:0000312" key="6">
    <source>
        <dbReference type="EMBL" id="AAF63132.1"/>
    </source>
</evidence>
<feature type="chain" id="PRO_0000435730" description="Nardilysin-like">
    <location>
        <begin position="1"/>
        <end position="1024"/>
    </location>
</feature>
<feature type="region of interest" description="Disordered" evidence="3">
    <location>
        <begin position="41"/>
        <end position="103"/>
    </location>
</feature>
<feature type="compositionally biased region" description="Acidic residues" evidence="3">
    <location>
        <begin position="52"/>
        <end position="95"/>
    </location>
</feature>
<feature type="active site" description="Proton acceptor" evidence="2">
    <location>
        <position position="132"/>
    </location>
</feature>
<feature type="active site" evidence="4">
    <location>
        <position position="203"/>
    </location>
</feature>
<feature type="binding site" evidence="2">
    <location>
        <position position="129"/>
    </location>
    <ligand>
        <name>Zn(2+)</name>
        <dbReference type="ChEBI" id="CHEBI:29105"/>
    </ligand>
</feature>
<feature type="binding site" evidence="2">
    <location>
        <position position="133"/>
    </location>
    <ligand>
        <name>Zn(2+)</name>
        <dbReference type="ChEBI" id="CHEBI:29105"/>
    </ligand>
</feature>
<feature type="binding site" evidence="4">
    <location>
        <position position="210"/>
    </location>
    <ligand>
        <name>Zn(2+)</name>
        <dbReference type="ChEBI" id="CHEBI:29105"/>
    </ligand>
</feature>
<feature type="sequence conflict" description="In Ref. 3; BAF01167." evidence="4" ref="3">
    <original>R</original>
    <variation>G</variation>
    <location>
        <position position="720"/>
    </location>
</feature>
<dbReference type="EC" id="3.4.24.61" evidence="4"/>
<dbReference type="EMBL" id="AC011001">
    <property type="protein sequence ID" value="AAF63132.1"/>
    <property type="status" value="ALT_SEQ"/>
    <property type="molecule type" value="Genomic_DNA"/>
</dbReference>
<dbReference type="EMBL" id="CP002684">
    <property type="protein sequence ID" value="AEE28051.1"/>
    <property type="molecule type" value="Genomic_DNA"/>
</dbReference>
<dbReference type="EMBL" id="AK229304">
    <property type="protein sequence ID" value="BAF01167.1"/>
    <property type="status" value="ALT_INIT"/>
    <property type="molecule type" value="mRNA"/>
</dbReference>
<dbReference type="PIR" id="G86203">
    <property type="entry name" value="G86203"/>
</dbReference>
<dbReference type="RefSeq" id="NP_172173.2">
    <property type="nucleotide sequence ID" value="NM_100565.5"/>
</dbReference>
<dbReference type="SMR" id="F4HNU6"/>
<dbReference type="FunCoup" id="F4HNU6">
    <property type="interactions" value="1368"/>
</dbReference>
<dbReference type="STRING" id="3702.F4HNU6"/>
<dbReference type="iPTMnet" id="F4HNU6"/>
<dbReference type="PaxDb" id="3702-AT1G06900.1"/>
<dbReference type="ProteomicsDB" id="250928"/>
<dbReference type="EnsemblPlants" id="AT1G06900.1">
    <property type="protein sequence ID" value="AT1G06900.1"/>
    <property type="gene ID" value="AT1G06900"/>
</dbReference>
<dbReference type="GeneID" id="837200"/>
<dbReference type="Gramene" id="AT1G06900.1">
    <property type="protein sequence ID" value="AT1G06900.1"/>
    <property type="gene ID" value="AT1G06900"/>
</dbReference>
<dbReference type="KEGG" id="ath:AT1G06900"/>
<dbReference type="Araport" id="AT1G06900"/>
<dbReference type="TAIR" id="AT1G06900"/>
<dbReference type="eggNOG" id="KOG0959">
    <property type="taxonomic scope" value="Eukaryota"/>
</dbReference>
<dbReference type="HOGENOM" id="CLU_004639_1_1_1"/>
<dbReference type="InParanoid" id="F4HNU6"/>
<dbReference type="OMA" id="INQVMEH"/>
<dbReference type="PRO" id="PR:F4HNU6"/>
<dbReference type="Proteomes" id="UP000006548">
    <property type="component" value="Chromosome 1"/>
</dbReference>
<dbReference type="ExpressionAtlas" id="F4HNU6">
    <property type="expression patterns" value="baseline and differential"/>
</dbReference>
<dbReference type="GO" id="GO:0005829">
    <property type="term" value="C:cytosol"/>
    <property type="evidence" value="ECO:0007005"/>
    <property type="project" value="TAIR"/>
</dbReference>
<dbReference type="GO" id="GO:0046872">
    <property type="term" value="F:metal ion binding"/>
    <property type="evidence" value="ECO:0007669"/>
    <property type="project" value="UniProtKB-KW"/>
</dbReference>
<dbReference type="GO" id="GO:0004222">
    <property type="term" value="F:metalloendopeptidase activity"/>
    <property type="evidence" value="ECO:0007669"/>
    <property type="project" value="UniProtKB-EC"/>
</dbReference>
<dbReference type="GO" id="GO:0006508">
    <property type="term" value="P:proteolysis"/>
    <property type="evidence" value="ECO:0007669"/>
    <property type="project" value="UniProtKB-KW"/>
</dbReference>
<dbReference type="FunFam" id="3.30.830.10:FF:000003">
    <property type="entry name" value="Insulin-degrading enzyme"/>
    <property type="match status" value="1"/>
</dbReference>
<dbReference type="FunFam" id="3.30.830.10:FF:000030">
    <property type="entry name" value="Insulin-degrading enzyme"/>
    <property type="match status" value="1"/>
</dbReference>
<dbReference type="FunFam" id="3.30.830.10:FF:000005">
    <property type="entry name" value="nardilysin isoform X1"/>
    <property type="match status" value="1"/>
</dbReference>
<dbReference type="Gene3D" id="3.30.830.10">
    <property type="entry name" value="Metalloenzyme, LuxS/M16 peptidase-like"/>
    <property type="match status" value="4"/>
</dbReference>
<dbReference type="InterPro" id="IPR011249">
    <property type="entry name" value="Metalloenz_LuxS/M16"/>
</dbReference>
<dbReference type="InterPro" id="IPR011765">
    <property type="entry name" value="Pept_M16_N"/>
</dbReference>
<dbReference type="InterPro" id="IPR001431">
    <property type="entry name" value="Pept_M16_Zn_BS"/>
</dbReference>
<dbReference type="InterPro" id="IPR050626">
    <property type="entry name" value="Peptidase_M16"/>
</dbReference>
<dbReference type="InterPro" id="IPR007863">
    <property type="entry name" value="Peptidase_M16_C"/>
</dbReference>
<dbReference type="InterPro" id="IPR032632">
    <property type="entry name" value="Peptidase_M16_M"/>
</dbReference>
<dbReference type="InterPro" id="IPR054734">
    <property type="entry name" value="PqqF-like_C_4"/>
</dbReference>
<dbReference type="PANTHER" id="PTHR43690:SF18">
    <property type="entry name" value="INSULIN-DEGRADING ENZYME-RELATED"/>
    <property type="match status" value="1"/>
</dbReference>
<dbReference type="PANTHER" id="PTHR43690">
    <property type="entry name" value="NARDILYSIN"/>
    <property type="match status" value="1"/>
</dbReference>
<dbReference type="Pfam" id="PF00675">
    <property type="entry name" value="Peptidase_M16"/>
    <property type="match status" value="1"/>
</dbReference>
<dbReference type="Pfam" id="PF05193">
    <property type="entry name" value="Peptidase_M16_C"/>
    <property type="match status" value="1"/>
</dbReference>
<dbReference type="Pfam" id="PF16187">
    <property type="entry name" value="Peptidase_M16_M"/>
    <property type="match status" value="1"/>
</dbReference>
<dbReference type="Pfam" id="PF22456">
    <property type="entry name" value="PqqF-like_C_4"/>
    <property type="match status" value="1"/>
</dbReference>
<dbReference type="SUPFAM" id="SSF63411">
    <property type="entry name" value="LuxS/MPP-like metallohydrolase"/>
    <property type="match status" value="4"/>
</dbReference>
<dbReference type="PROSITE" id="PS00143">
    <property type="entry name" value="INSULINASE"/>
    <property type="match status" value="1"/>
</dbReference>